<proteinExistence type="evidence at transcript level"/>
<evidence type="ECO:0000250" key="1"/>
<evidence type="ECO:0000255" key="2"/>
<evidence type="ECO:0000305" key="3"/>
<reference key="1">
    <citation type="submission" date="2003-10" db="EMBL/GenBank/DDBJ databases">
        <authorList>
            <consortium name="NIH - Zebrafish Gene Collection (ZGC) project"/>
        </authorList>
    </citation>
    <scope>NUCLEOTIDE SEQUENCE [LARGE SCALE MRNA]</scope>
    <source>
        <tissue>Eye</tissue>
    </source>
</reference>
<keyword id="KW-0010">Activator</keyword>
<keyword id="KW-0175">Coiled coil</keyword>
<keyword id="KW-0539">Nucleus</keyword>
<keyword id="KW-1185">Reference proteome</keyword>
<keyword id="KW-0804">Transcription</keyword>
<keyword id="KW-0805">Transcription regulation</keyword>
<sequence length="174" mass="20201">MTTPPLAQFSGQQQQQTQAARDVNTASLCRIGQETVQDIVLRTMEIFQLLRNMQLPNGVTYHPNTHQDRLGKLQEHLRTLSVLFRKLRLVYDKCNENCAGLEPIPSEQLIPYVEDDSSKLEDRMANQLRAASEERREVLEVNKKLKQKNQQLKMIMDQLRNLIWEINSMLAVRS</sequence>
<comment type="function">
    <text evidence="1">Component of the Mediator complex, a coactivator involved in the regulated transcription of nearly all RNA polymerase II-dependent genes. Mediator functions as a bridge to convey information from gene-specific regulatory proteins to the basal RNA polymerase II transcription machinery. Mediator is recruited to promoters by direct interactions with regulatory proteins and serves as a scaffold for the assembly of a functional preinitiation complex with RNA polymerase II and the general transcription factors (By similarity).</text>
</comment>
<comment type="subunit">
    <text evidence="1">Component of the Mediator complex.</text>
</comment>
<comment type="subcellular location">
    <subcellularLocation>
        <location evidence="3">Nucleus</location>
    </subcellularLocation>
</comment>
<comment type="similarity">
    <text evidence="3">Belongs to the Mediator complex subunit 30 family.</text>
</comment>
<feature type="chain" id="PRO_0000305907" description="Mediator of RNA polymerase II transcription subunit 30">
    <location>
        <begin position="1"/>
        <end position="174"/>
    </location>
</feature>
<feature type="coiled-coil region" evidence="2">
    <location>
        <begin position="113"/>
        <end position="166"/>
    </location>
</feature>
<gene>
    <name type="primary">med30</name>
    <name type="synonym">thrap6</name>
    <name type="ORF">zgc:73113</name>
</gene>
<organism>
    <name type="scientific">Danio rerio</name>
    <name type="common">Zebrafish</name>
    <name type="synonym">Brachydanio rerio</name>
    <dbReference type="NCBI Taxonomy" id="7955"/>
    <lineage>
        <taxon>Eukaryota</taxon>
        <taxon>Metazoa</taxon>
        <taxon>Chordata</taxon>
        <taxon>Craniata</taxon>
        <taxon>Vertebrata</taxon>
        <taxon>Euteleostomi</taxon>
        <taxon>Actinopterygii</taxon>
        <taxon>Neopterygii</taxon>
        <taxon>Teleostei</taxon>
        <taxon>Ostariophysi</taxon>
        <taxon>Cypriniformes</taxon>
        <taxon>Danionidae</taxon>
        <taxon>Danioninae</taxon>
        <taxon>Danio</taxon>
    </lineage>
</organism>
<dbReference type="EMBL" id="BC059478">
    <property type="protein sequence ID" value="AAH59478.1"/>
    <property type="molecule type" value="mRNA"/>
</dbReference>
<dbReference type="RefSeq" id="NP_957011.1">
    <property type="nucleotide sequence ID" value="NM_200717.1"/>
</dbReference>
<dbReference type="SMR" id="Q6PC45"/>
<dbReference type="FunCoup" id="Q6PC45">
    <property type="interactions" value="1649"/>
</dbReference>
<dbReference type="STRING" id="7955.ENSDARP00000134817"/>
<dbReference type="PaxDb" id="7955-ENSDARP00000039524"/>
<dbReference type="GeneID" id="393690"/>
<dbReference type="KEGG" id="dre:393690"/>
<dbReference type="AGR" id="ZFIN:ZDB-GENE-040426-1676"/>
<dbReference type="CTD" id="90390"/>
<dbReference type="ZFIN" id="ZDB-GENE-040426-1676">
    <property type="gene designation" value="med30"/>
</dbReference>
<dbReference type="eggNOG" id="ENOG502QV3C">
    <property type="taxonomic scope" value="Eukaryota"/>
</dbReference>
<dbReference type="InParanoid" id="Q6PC45"/>
<dbReference type="OrthoDB" id="10067025at2759"/>
<dbReference type="PhylomeDB" id="Q6PC45"/>
<dbReference type="PRO" id="PR:Q6PC45"/>
<dbReference type="Proteomes" id="UP000000437">
    <property type="component" value="Chromosome 19"/>
</dbReference>
<dbReference type="GO" id="GO:0016592">
    <property type="term" value="C:mediator complex"/>
    <property type="evidence" value="ECO:0000318"/>
    <property type="project" value="GO_Central"/>
</dbReference>
<dbReference type="GO" id="GO:0003712">
    <property type="term" value="F:transcription coregulator activity"/>
    <property type="evidence" value="ECO:0000318"/>
    <property type="project" value="GO_Central"/>
</dbReference>
<dbReference type="GO" id="GO:0045893">
    <property type="term" value="P:positive regulation of DNA-templated transcription"/>
    <property type="evidence" value="ECO:0000318"/>
    <property type="project" value="GO_Central"/>
</dbReference>
<dbReference type="InterPro" id="IPR021019">
    <property type="entry name" value="Mediator_Med30_met"/>
</dbReference>
<dbReference type="PANTHER" id="PTHR31705">
    <property type="entry name" value="MEDIATOR OF RNA POLYMERASE II TRANSCRIPTION SUBUNIT 30"/>
    <property type="match status" value="1"/>
</dbReference>
<dbReference type="PANTHER" id="PTHR31705:SF5">
    <property type="entry name" value="MEDIATOR OF RNA POLYMERASE II TRANSCRIPTION SUBUNIT 30"/>
    <property type="match status" value="1"/>
</dbReference>
<dbReference type="Pfam" id="PF11315">
    <property type="entry name" value="Med30"/>
    <property type="match status" value="1"/>
</dbReference>
<accession>Q6PC45</accession>
<protein>
    <recommendedName>
        <fullName>Mediator of RNA polymerase II transcription subunit 30</fullName>
    </recommendedName>
    <alternativeName>
        <fullName>Mediator complex subunit 30</fullName>
    </alternativeName>
    <alternativeName>
        <fullName>Thyroid hormone receptor-associated protein 6 homolog</fullName>
    </alternativeName>
</protein>
<name>MED30_DANRE</name>